<proteinExistence type="inferred from homology"/>
<organism>
    <name type="scientific">Flavobacterium johnsoniae (strain ATCC 17061 / DSM 2064 / JCM 8514 / BCRC 14874 / CCUG 350202 / NBRC 14942 / NCIMB 11054 / UW101)</name>
    <name type="common">Cytophaga johnsonae</name>
    <dbReference type="NCBI Taxonomy" id="376686"/>
    <lineage>
        <taxon>Bacteria</taxon>
        <taxon>Pseudomonadati</taxon>
        <taxon>Bacteroidota</taxon>
        <taxon>Flavobacteriia</taxon>
        <taxon>Flavobacteriales</taxon>
        <taxon>Flavobacteriaceae</taxon>
        <taxon>Flavobacterium</taxon>
    </lineage>
</organism>
<accession>Q9RB36</accession>
<accession>A5FMG7</accession>
<dbReference type="EC" id="5.4.99.25" evidence="1"/>
<dbReference type="EMBL" id="AF169967">
    <property type="protein sequence ID" value="AAD50463.1"/>
    <property type="molecule type" value="Genomic_DNA"/>
</dbReference>
<dbReference type="EMBL" id="CP000685">
    <property type="protein sequence ID" value="ABQ03605.1"/>
    <property type="molecule type" value="Genomic_DNA"/>
</dbReference>
<dbReference type="RefSeq" id="WP_012022661.1">
    <property type="nucleotide sequence ID" value="NC_009441.1"/>
</dbReference>
<dbReference type="SMR" id="Q9RB36"/>
<dbReference type="STRING" id="376686.Fjoh_0570"/>
<dbReference type="KEGG" id="fjo:Fjoh_0570"/>
<dbReference type="eggNOG" id="COG0130">
    <property type="taxonomic scope" value="Bacteria"/>
</dbReference>
<dbReference type="HOGENOM" id="CLU_032087_2_0_10"/>
<dbReference type="OrthoDB" id="9802309at2"/>
<dbReference type="Proteomes" id="UP000006694">
    <property type="component" value="Chromosome"/>
</dbReference>
<dbReference type="GO" id="GO:0003723">
    <property type="term" value="F:RNA binding"/>
    <property type="evidence" value="ECO:0007669"/>
    <property type="project" value="InterPro"/>
</dbReference>
<dbReference type="GO" id="GO:0160148">
    <property type="term" value="F:tRNA pseudouridine(55) synthase activity"/>
    <property type="evidence" value="ECO:0007669"/>
    <property type="project" value="UniProtKB-EC"/>
</dbReference>
<dbReference type="GO" id="GO:1990481">
    <property type="term" value="P:mRNA pseudouridine synthesis"/>
    <property type="evidence" value="ECO:0007669"/>
    <property type="project" value="TreeGrafter"/>
</dbReference>
<dbReference type="GO" id="GO:0031119">
    <property type="term" value="P:tRNA pseudouridine synthesis"/>
    <property type="evidence" value="ECO:0007669"/>
    <property type="project" value="UniProtKB-UniRule"/>
</dbReference>
<dbReference type="CDD" id="cd02573">
    <property type="entry name" value="PseudoU_synth_EcTruB"/>
    <property type="match status" value="1"/>
</dbReference>
<dbReference type="Gene3D" id="3.30.2350.10">
    <property type="entry name" value="Pseudouridine synthase"/>
    <property type="match status" value="1"/>
</dbReference>
<dbReference type="HAMAP" id="MF_01080">
    <property type="entry name" value="TruB_bact"/>
    <property type="match status" value="1"/>
</dbReference>
<dbReference type="InterPro" id="IPR020103">
    <property type="entry name" value="PsdUridine_synth_cat_dom_sf"/>
</dbReference>
<dbReference type="InterPro" id="IPR002501">
    <property type="entry name" value="PsdUridine_synth_N"/>
</dbReference>
<dbReference type="InterPro" id="IPR014780">
    <property type="entry name" value="tRNA_psdUridine_synth_TruB"/>
</dbReference>
<dbReference type="NCBIfam" id="TIGR00431">
    <property type="entry name" value="TruB"/>
    <property type="match status" value="1"/>
</dbReference>
<dbReference type="PANTHER" id="PTHR13767:SF2">
    <property type="entry name" value="PSEUDOURIDYLATE SYNTHASE TRUB1"/>
    <property type="match status" value="1"/>
</dbReference>
<dbReference type="PANTHER" id="PTHR13767">
    <property type="entry name" value="TRNA-PSEUDOURIDINE SYNTHASE"/>
    <property type="match status" value="1"/>
</dbReference>
<dbReference type="Pfam" id="PF01509">
    <property type="entry name" value="TruB_N"/>
    <property type="match status" value="1"/>
</dbReference>
<dbReference type="SUPFAM" id="SSF55120">
    <property type="entry name" value="Pseudouridine synthase"/>
    <property type="match status" value="1"/>
</dbReference>
<gene>
    <name evidence="1" type="primary">truB</name>
    <name type="ordered locus">Fjoh_0570</name>
</gene>
<reference key="1">
    <citation type="submission" date="1999-07" db="EMBL/GenBank/DDBJ databases">
        <title>Transposon insertions in the Flavobacterium johnsonae ftsX gene disrupt gliding motility and cell division.</title>
        <authorList>
            <person name="Kempf M.J."/>
            <person name="McBride M.J."/>
        </authorList>
    </citation>
    <scope>NUCLEOTIDE SEQUENCE [GENOMIC DNA]</scope>
</reference>
<reference key="2">
    <citation type="journal article" date="2009" name="Appl. Environ. Microbiol.">
        <title>Novel features of the polysaccharide-digesting gliding bacterium Flavobacterium johnsoniae as revealed by genome sequence analysis.</title>
        <authorList>
            <person name="McBride M.J."/>
            <person name="Xie G."/>
            <person name="Martens E.C."/>
            <person name="Lapidus A."/>
            <person name="Henrissat B."/>
            <person name="Rhodes R.G."/>
            <person name="Goltsman E."/>
            <person name="Wang W."/>
            <person name="Xu J."/>
            <person name="Hunnicutt D.W."/>
            <person name="Staroscik A.M."/>
            <person name="Hoover T.R."/>
            <person name="Cheng Y.Q."/>
            <person name="Stein J.L."/>
        </authorList>
    </citation>
    <scope>NUCLEOTIDE SEQUENCE [LARGE SCALE GENOMIC DNA]</scope>
    <source>
        <strain>ATCC 17061 / DSM 2064 / JCM 8514 / BCRC 14874 / CCUG 350202 / NBRC 14942 / NCIMB 11054 / UW101</strain>
    </source>
</reference>
<sequence length="229" mass="25872">MTPEEYLEGQVLLIDKPLKWSSFQAVNKLKYLLINKVGLPKKFKIGHAGTLDPLATGLLLICTGKFTKKISELQGQAKEYTGTFYIGATTPSYDLETEIDQTFPTEHINEVLIHETVKQFLGEIDQKPPIFSAIKKDGVRLYEHARAGESIEIESRKTTIHEFEITRIALPEIDFRVVCSKGTYIRSLAYDFGKAMNSGSHLTVLRRTKIGDYDVKNAIDITLFEESLQ</sequence>
<evidence type="ECO:0000255" key="1">
    <source>
        <dbReference type="HAMAP-Rule" id="MF_01080"/>
    </source>
</evidence>
<name>TRUB_FLAJ1</name>
<feature type="chain" id="PRO_0000121826" description="tRNA pseudouridine synthase B">
    <location>
        <begin position="1"/>
        <end position="229"/>
    </location>
</feature>
<feature type="active site" description="Nucleophile" evidence="1">
    <location>
        <position position="52"/>
    </location>
</feature>
<comment type="function">
    <text evidence="1">Responsible for synthesis of pseudouridine from uracil-55 in the psi GC loop of transfer RNAs.</text>
</comment>
<comment type="catalytic activity">
    <reaction evidence="1">
        <text>uridine(55) in tRNA = pseudouridine(55) in tRNA</text>
        <dbReference type="Rhea" id="RHEA:42532"/>
        <dbReference type="Rhea" id="RHEA-COMP:10101"/>
        <dbReference type="Rhea" id="RHEA-COMP:10102"/>
        <dbReference type="ChEBI" id="CHEBI:65314"/>
        <dbReference type="ChEBI" id="CHEBI:65315"/>
        <dbReference type="EC" id="5.4.99.25"/>
    </reaction>
</comment>
<comment type="similarity">
    <text evidence="1">Belongs to the pseudouridine synthase TruB family. Type 1 subfamily.</text>
</comment>
<protein>
    <recommendedName>
        <fullName evidence="1">tRNA pseudouridine synthase B</fullName>
        <ecNumber evidence="1">5.4.99.25</ecNumber>
    </recommendedName>
    <alternativeName>
        <fullName evidence="1">tRNA pseudouridine(55) synthase</fullName>
        <shortName evidence="1">Psi55 synthase</shortName>
    </alternativeName>
    <alternativeName>
        <fullName evidence="1">tRNA pseudouridylate synthase</fullName>
    </alternativeName>
    <alternativeName>
        <fullName evidence="1">tRNA-uridine isomerase</fullName>
    </alternativeName>
</protein>
<keyword id="KW-0413">Isomerase</keyword>
<keyword id="KW-0819">tRNA processing</keyword>